<organism>
    <name type="scientific">Human immunodeficiency virus type 1 group M subtype B (isolate MN)</name>
    <name type="common">HIV-1</name>
    <dbReference type="NCBI Taxonomy" id="11696"/>
    <lineage>
        <taxon>Viruses</taxon>
        <taxon>Riboviria</taxon>
        <taxon>Pararnavirae</taxon>
        <taxon>Artverviricota</taxon>
        <taxon>Revtraviricetes</taxon>
        <taxon>Ortervirales</taxon>
        <taxon>Retroviridae</taxon>
        <taxon>Orthoretrovirinae</taxon>
        <taxon>Lentivirus</taxon>
        <taxon>Human immunodeficiency virus type 1</taxon>
    </lineage>
</organism>
<comment type="function">
    <text evidence="2">Counteracts the innate antiviral activity of host APOBEC3F and APOBEC3G by promoting their ubiquitination and degradation. Acts as a substrate recognition component of an E3 ubiquitin-protein ligase complex: mechanistically, Vif hijacks a host cullin-5-RING E3 ubiquitin-protein ligase complex (ECS complex) and the transcription coactivator CBFB/CBF-beta to form an active E3 ubiquitin-protein ligase complex that targets APOBEC3G and APOBEC3F for polyubiquitination, leading to their degradation by the proteasome. Vif interaction with APOBEC3G also blocks its cytidine deaminase activity in a proteasome-independent manner, suggesting a dual inhibitory mechanism. May interact directly with APOBEC3G mRNA in order to inhibit its translation. Association with CBFB/CBF-beta also inhibits the transcription coactivator activity of CBFB/CBF-beta. Seems to play a role in viral morphology by affecting the stability of the viral nucleoprotein core. Finally, Vif also contributes to the G2 cell cycle arrest observed in HIV infected cells.</text>
</comment>
<comment type="subunit">
    <text evidence="1">Homomultimer; in vitro and presumably in vivo. Interacts with viral RNA and Pr55Gag precursor; these interactions mediate Vif incorporation into the virion. Interacts with the viral reverse transcriptase. Forms cullin-5-RING E3 ubiquitin-protein ligase complex (ECS complex) by interacting with host CUL5, RBX2, elongin BC complex (ELOB and ELOC) and CBFB/CBF-beta. Within the ECS complex, Vif interacts directly with host CUL5, ELOC and APOBEC (APOBEC3F and APOBEC3G) substrates. The ECS complex also contains some single-stranded RNA (ssRNA) that acts as a glue that bridges Vif with APOBEC (APOBEC3F and APOBEC3G) substrates. Interacts with host UBCE7IP1 isoform 3/ZIN and possibly with SAT. Interacts with host tyrosine kinases HCK and FYN; these interactions may decrease level of phosphorylated APOBEC3G incorporation into virions. Interacts with host ABCE1; this interaction may play a role in protecting viral RNA from damage during viral assembly. Interacts with host MDM2; this interaction targets Vif for degradation by the proteasome.</text>
</comment>
<comment type="subcellular location">
    <subcellularLocation>
        <location evidence="2">Host cytoplasm</location>
    </subcellularLocation>
    <subcellularLocation>
        <location evidence="2">Host cell membrane</location>
        <topology evidence="2">Peripheral membrane protein</topology>
        <orientation evidence="2">Cytoplasmic side</orientation>
    </subcellularLocation>
    <subcellularLocation>
        <location evidence="2">Virion</location>
    </subcellularLocation>
    <text evidence="2">In the cytoplasm, seems to colocalize with intermediate filament vimentin. A fraction is associated with the cytoplasmic side of cellular membranes, presumably via the interaction with Pr55Gag precursor. Incorporated in virions at a ratio of approximately 7 to 20 molecules per virion.</text>
</comment>
<comment type="induction">
    <text evidence="2">Expressed late during infection in a Rev-dependent manner.</text>
</comment>
<comment type="domain">
    <text evidence="2">The BC-like-box motif mediates the interaction with elongin BC complex.</text>
</comment>
<comment type="domain">
    <text evidence="2">The HCCH motif (H-x(5)-C-x(18)-C-x(5)-H) mediates the interaction with CUL5.</text>
</comment>
<comment type="PTM">
    <text evidence="2">Processed in virion by the viral protease.</text>
</comment>
<comment type="PTM">
    <text evidence="2">Highly phosphorylated on serine and threonine residues.</text>
</comment>
<comment type="PTM">
    <text evidence="2">Polyubiquitinated and degraded by the proteasome in the presence of APOBEC3G.</text>
</comment>
<comment type="miscellaneous">
    <text evidence="2">Vif-defective viruses show catastrophic failure in reverse transcription due to APOBEC-induced mutations that initiate a DNA base repair pathway and compromise the structural integrity of the ssDNA. In the absence of Vif, the virion is morphologically abnormal.</text>
</comment>
<comment type="miscellaneous">
    <text evidence="2">HIV-1 lineages are divided in three main groups, M (for Major), O (for Outlier), and N (for New, or Non-M, Non-O). The vast majority of strains found worldwide belong to the group M. Group O seems to be endemic to and largely confined to Cameroon and neighboring countries in West Central Africa, where these viruses represent a small minority of HIV-1 strains. The group N is represented by a limited number of isolates from Cameroonian persons. The group M is further subdivided in 9 clades or subtypes (A to D, F to H, J and K).</text>
</comment>
<comment type="miscellaneous">
    <text evidence="2">Required for replication in 'nonpermissive' cells, including primary T-cells, macrophages and certain T-cell lines, but is dispensable for replication in 'permissive' cell lines, such as 293T cells. In nonpermissive cells, Vif-defective viruses can produce virions, but they fail to complete reverse transcription and cannot successfully infect new cells.</text>
</comment>
<comment type="similarity">
    <text evidence="2">Belongs to the primate lentivirus group Vif protein family.</text>
</comment>
<accession>P05898</accession>
<keyword id="KW-0014">AIDS</keyword>
<keyword id="KW-1032">Host cell membrane</keyword>
<keyword id="KW-1035">Host cytoplasm</keyword>
<keyword id="KW-1043">Host membrane</keyword>
<keyword id="KW-0945">Host-virus interaction</keyword>
<keyword id="KW-0472">Membrane</keyword>
<keyword id="KW-0479">Metal-binding</keyword>
<keyword id="KW-0597">Phosphoprotein</keyword>
<keyword id="KW-1185">Reference proteome</keyword>
<keyword id="KW-0694">RNA-binding</keyword>
<keyword id="KW-0832">Ubl conjugation</keyword>
<keyword id="KW-0833">Ubl conjugation pathway</keyword>
<keyword id="KW-0946">Virion</keyword>
<keyword id="KW-0862">Zinc</keyword>
<dbReference type="EMBL" id="M17449">
    <property type="protein sequence ID" value="AAA44854.1"/>
    <property type="molecule type" value="Genomic_RNA"/>
</dbReference>
<dbReference type="SMR" id="P05898"/>
<dbReference type="Proteomes" id="UP000007697">
    <property type="component" value="Genome"/>
</dbReference>
<dbReference type="GO" id="GO:0030430">
    <property type="term" value="C:host cell cytoplasm"/>
    <property type="evidence" value="ECO:0007669"/>
    <property type="project" value="UniProtKB-SubCell"/>
</dbReference>
<dbReference type="GO" id="GO:0020002">
    <property type="term" value="C:host cell plasma membrane"/>
    <property type="evidence" value="ECO:0007669"/>
    <property type="project" value="UniProtKB-SubCell"/>
</dbReference>
<dbReference type="GO" id="GO:0016020">
    <property type="term" value="C:membrane"/>
    <property type="evidence" value="ECO:0007669"/>
    <property type="project" value="UniProtKB-UniRule"/>
</dbReference>
<dbReference type="GO" id="GO:0044423">
    <property type="term" value="C:virion component"/>
    <property type="evidence" value="ECO:0007669"/>
    <property type="project" value="UniProtKB-UniRule"/>
</dbReference>
<dbReference type="GO" id="GO:0046872">
    <property type="term" value="F:metal ion binding"/>
    <property type="evidence" value="ECO:0007669"/>
    <property type="project" value="UniProtKB-KW"/>
</dbReference>
<dbReference type="GO" id="GO:0003723">
    <property type="term" value="F:RNA binding"/>
    <property type="evidence" value="ECO:0007669"/>
    <property type="project" value="UniProtKB-UniRule"/>
</dbReference>
<dbReference type="GO" id="GO:0019058">
    <property type="term" value="P:viral life cycle"/>
    <property type="evidence" value="ECO:0007669"/>
    <property type="project" value="InterPro"/>
</dbReference>
<dbReference type="HAMAP" id="MF_04081">
    <property type="entry name" value="HIV_VIF"/>
    <property type="match status" value="1"/>
</dbReference>
<dbReference type="InterPro" id="IPR000475">
    <property type="entry name" value="Vif"/>
</dbReference>
<dbReference type="Pfam" id="PF00559">
    <property type="entry name" value="Vif"/>
    <property type="match status" value="1"/>
</dbReference>
<dbReference type="PRINTS" id="PR00349">
    <property type="entry name" value="VIRIONINFFCT"/>
</dbReference>
<evidence type="ECO:0000250" key="1">
    <source>
        <dbReference type="UniProtKB" id="O70897"/>
    </source>
</evidence>
<evidence type="ECO:0000255" key="2">
    <source>
        <dbReference type="HAMAP-Rule" id="MF_04081"/>
    </source>
</evidence>
<evidence type="ECO:0000256" key="3">
    <source>
        <dbReference type="SAM" id="MobiDB-lite"/>
    </source>
</evidence>
<reference key="1">
    <citation type="journal article" date="1988" name="Virology">
        <title>Envelope sequences of two new United States HIV-1 isolates.</title>
        <authorList>
            <person name="Gurgo C."/>
            <person name="Guo H.-G."/>
            <person name="Franchini G."/>
            <person name="Aldovini A."/>
            <person name="Collalti E."/>
            <person name="Farrell K."/>
            <person name="Wong-Staal F."/>
            <person name="Gallo R.C."/>
            <person name="Reitz M.S. Jr."/>
        </authorList>
    </citation>
    <scope>NUCLEOTIDE SEQUENCE [GENOMIC RNA]</scope>
</reference>
<reference key="2">
    <citation type="journal article" date="2004" name="Trends Mol. Med.">
        <title>The viral infectivity factor (Vif) of HIV-1 unveiled.</title>
        <authorList>
            <person name="Rose K.M."/>
            <person name="Marin M."/>
            <person name="Kozak S.L."/>
            <person name="Kabat D."/>
        </authorList>
    </citation>
    <scope>REVIEW</scope>
</reference>
<organismHost>
    <name type="scientific">Homo sapiens</name>
    <name type="common">Human</name>
    <dbReference type="NCBI Taxonomy" id="9606"/>
</organismHost>
<feature type="chain" id="PRO_0000043053" description="Virion infectivity factor" evidence="2">
    <location>
        <begin position="1"/>
        <end position="192"/>
    </location>
</feature>
<feature type="chain" id="PRO_0000043054" description="p17" evidence="2">
    <location>
        <begin position="1"/>
        <end position="150"/>
    </location>
</feature>
<feature type="chain" id="PRO_0000043055" description="p7" evidence="2">
    <location>
        <begin position="151"/>
        <end position="192"/>
    </location>
</feature>
<feature type="region of interest" description="Interaction with host APOBEC3F; F1-box" evidence="2">
    <location>
        <begin position="14"/>
        <end position="17"/>
    </location>
</feature>
<feature type="region of interest" description="Interaction with host APOBEC3G; G-box" evidence="2">
    <location>
        <begin position="40"/>
        <end position="44"/>
    </location>
</feature>
<feature type="region of interest" description="Interaction with host APOBEC3F and APOBEC3G; FG-box" evidence="2">
    <location>
        <begin position="54"/>
        <end position="72"/>
    </location>
</feature>
<feature type="region of interest" description="Interaction with host APOBEC3F; F2-box" evidence="2">
    <location>
        <begin position="74"/>
        <end position="79"/>
    </location>
</feature>
<feature type="region of interest" description="RNA-binding" evidence="2">
    <location>
        <begin position="75"/>
        <end position="114"/>
    </location>
</feature>
<feature type="region of interest" description="SOCS box-like" evidence="2">
    <location>
        <begin position="151"/>
        <end position="180"/>
    </location>
</feature>
<feature type="region of interest" description="Multimerization" evidence="2">
    <location>
        <begin position="151"/>
        <end position="164"/>
    </location>
</feature>
<feature type="region of interest" description="Disordered" evidence="3">
    <location>
        <begin position="164"/>
        <end position="192"/>
    </location>
</feature>
<feature type="region of interest" description="Membrane association" evidence="2">
    <location>
        <begin position="171"/>
        <end position="172"/>
    </location>
</feature>
<feature type="short sequence motif" description="HCCH motif" evidence="2">
    <location>
        <begin position="108"/>
        <end position="139"/>
    </location>
</feature>
<feature type="short sequence motif" description="BC-box-like motif" evidence="2">
    <location>
        <begin position="144"/>
        <end position="153"/>
    </location>
</feature>
<feature type="compositionally biased region" description="Basic residues" evidence="3">
    <location>
        <begin position="176"/>
        <end position="186"/>
    </location>
</feature>
<feature type="binding site" evidence="2">
    <location>
        <position position="108"/>
    </location>
    <ligand>
        <name>Zn(2+)</name>
        <dbReference type="ChEBI" id="CHEBI:29105"/>
    </ligand>
</feature>
<feature type="binding site" evidence="2">
    <location>
        <position position="114"/>
    </location>
    <ligand>
        <name>Zn(2+)</name>
        <dbReference type="ChEBI" id="CHEBI:29105"/>
    </ligand>
</feature>
<feature type="binding site" evidence="2">
    <location>
        <position position="133"/>
    </location>
    <ligand>
        <name>Zn(2+)</name>
        <dbReference type="ChEBI" id="CHEBI:29105"/>
    </ligand>
</feature>
<feature type="binding site" evidence="2">
    <location>
        <position position="139"/>
    </location>
    <ligand>
        <name>Zn(2+)</name>
        <dbReference type="ChEBI" id="CHEBI:29105"/>
    </ligand>
</feature>
<feature type="site" description="Cleavage in virion (by viral protease)" evidence="2">
    <location>
        <begin position="150"/>
        <end position="151"/>
    </location>
</feature>
<feature type="modified residue" description="Phosphothreonine; by host MAP4K1" evidence="2">
    <location>
        <position position="96"/>
    </location>
</feature>
<feature type="modified residue" description="Phosphothreonine; by host" evidence="2">
    <location>
        <position position="155"/>
    </location>
</feature>
<feature type="modified residue" description="Phosphoserine; by host MAP4K1" evidence="2">
    <location>
        <position position="165"/>
    </location>
</feature>
<feature type="modified residue" description="Phosphothreonine; by host" evidence="2">
    <location>
        <position position="188"/>
    </location>
</feature>
<name>VIF_HV1MN</name>
<protein>
    <recommendedName>
        <fullName evidence="2">Virion infectivity factor</fullName>
        <shortName evidence="2">Vif</shortName>
    </recommendedName>
    <alternativeName>
        <fullName evidence="2">SOR protein</fullName>
    </alternativeName>
    <component>
        <recommendedName>
            <fullName evidence="2">p17</fullName>
        </recommendedName>
    </component>
    <component>
        <recommendedName>
            <fullName evidence="2">p7</fullName>
        </recommendedName>
    </component>
</protein>
<gene>
    <name evidence="2" type="primary">vif</name>
</gene>
<proteinExistence type="inferred from homology"/>
<sequence length="192" mass="22488">MENRRQVMIVWQADRMRIRTWKSLVKHHMYISKKAKGRFYRHHYESTHPRISSEVHIPLGDARLVITTYWGLHTGERDWHLGQGVSIEWRKKRYSTQVDPDLADHLIHLHYFDCFSDSAIRKAILGHRVSPICEFQAGHNKVGPLQYLALTALITPKKIKPPLPSVKKLTEDRWNKPQKTKGHRGSHTINGH</sequence>